<comment type="function">
    <text evidence="2">RNA-binding protein that function as a pre-mRNA splicing factor. Plays a critical role in both constitutive and enhancer-dependent splicing by mediating protein-protein interactions and protein-RNA interactions required for accurate 3'-splice site selection. Acts by enhancing the binding of U2AF2 to weak pyrimidine tracts. Also participates in the regulation of alternative pre-mRNA splicing. Activates exon 5 skipping of PTPRC during T-cell activation; an event reversed by GFI1. Binds to RNA at the AG dinucleotide at the 3'-splice site. Shows a preference for AGC or AGA.</text>
</comment>
<comment type="subunit">
    <text evidence="2">Interacts with GFI1, U2AF2 and C1QBP.</text>
</comment>
<comment type="subcellular location">
    <subcellularLocation>
        <location evidence="2">Nucleus</location>
    </subcellularLocation>
    <subcellularLocation>
        <location evidence="2">Nucleus speckle</location>
    </subcellularLocation>
    <subcellularLocation>
        <location evidence="2">Cytoplasm</location>
    </subcellularLocation>
    <text evidence="2">Interaction with C1QBP is required for the nuclear translocation. Displays active nucleo-cytoplasmic shuttling.</text>
</comment>
<comment type="alternative products">
    <event type="alternative splicing"/>
    <isoform>
        <id>Q7TP17-1</id>
        <name>1</name>
        <sequence type="displayed"/>
    </isoform>
    <isoform>
        <id>Q7TP17-2</id>
        <name>2</name>
        <sequence type="described" ref="VSP_029266"/>
    </isoform>
</comment>
<comment type="domain">
    <text evidence="1">The second zinc finger in necessary for interaction with GFI1 and for alternative pre-mRNA splicing events.</text>
</comment>
<comment type="domain">
    <text evidence="2">The region 162-220 is essential for the nuclear import of the protein in spite of the absence of a nuclear localization signal (NLS). This region is essential for the interaction with C1QBP, interaction which is required for the nuclear translocation. This region may be involved in the localization in nuclear dot-like structures and it also confers the ability of nucleo-cytoplasmic shuttling.</text>
</comment>
<comment type="similarity">
    <text evidence="8">Belongs to the splicing factor SR family.</text>
</comment>
<comment type="caution">
    <text evidence="8">Orthologs of U2AF1L4 do not appear to exist in lower eukaryotes, Drosophila, C.elegans, plants, or vertebrates such as Xenopus or zebrafish. Existence of circadian and light-inducible alternative splicing of U2AF1L4 similar to the mouse in human and rat is not yet proven.</text>
</comment>
<name>U2AF4_RAT</name>
<organism>
    <name type="scientific">Rattus norvegicus</name>
    <name type="common">Rat</name>
    <dbReference type="NCBI Taxonomy" id="10116"/>
    <lineage>
        <taxon>Eukaryota</taxon>
        <taxon>Metazoa</taxon>
        <taxon>Chordata</taxon>
        <taxon>Craniata</taxon>
        <taxon>Vertebrata</taxon>
        <taxon>Euteleostomi</taxon>
        <taxon>Mammalia</taxon>
        <taxon>Eutheria</taxon>
        <taxon>Euarchontoglires</taxon>
        <taxon>Glires</taxon>
        <taxon>Rodentia</taxon>
        <taxon>Myomorpha</taxon>
        <taxon>Muroidea</taxon>
        <taxon>Muridae</taxon>
        <taxon>Murinae</taxon>
        <taxon>Rattus</taxon>
    </lineage>
</organism>
<keyword id="KW-0007">Acetylation</keyword>
<keyword id="KW-0025">Alternative splicing</keyword>
<keyword id="KW-0963">Cytoplasm</keyword>
<keyword id="KW-0479">Metal-binding</keyword>
<keyword id="KW-0507">mRNA processing</keyword>
<keyword id="KW-0508">mRNA splicing</keyword>
<keyword id="KW-0539">Nucleus</keyword>
<keyword id="KW-1185">Reference proteome</keyword>
<keyword id="KW-0677">Repeat</keyword>
<keyword id="KW-0694">RNA-binding</keyword>
<keyword id="KW-0747">Spliceosome</keyword>
<keyword id="KW-0862">Zinc</keyword>
<keyword id="KW-0863">Zinc-finger</keyword>
<protein>
    <recommendedName>
        <fullName>Splicing factor U2AF 26 kDa subunit</fullName>
    </recommendedName>
    <alternativeName>
        <fullName>Liver regeneration-related protein LRRG157/LRRG158</fullName>
    </alternativeName>
    <alternativeName>
        <fullName>U2 auxiliary factor 26</fullName>
    </alternativeName>
    <alternativeName>
        <fullName>U2 small nuclear RNA auxiliary factor 1-like protein 4</fullName>
        <shortName evidence="2">U2AF1-like 4</shortName>
    </alternativeName>
</protein>
<gene>
    <name type="primary">U2af1l4</name>
    <name type="ORF">Cb2-806</name>
    <name type="ORF">Cb2-807</name>
</gene>
<sequence length="220" mass="25836">MAEYLASIFGTEKDKVNCSFYFKIGACRHGDRCSRLHNKPTFSQTIVLLNLYRNPQNTAQTADGSHCHVSDVEVQEHYDNFFEEVFTELQEKYGEIEEMNVCDNLGDHLVGNVYVKFRREEDAERAVAELNNRWFNGQAVHAELSPVTDFRESCCRQYEMGECTRGGFCNFMHLRPISRNLRRQLYGRGPRHRSPPRSHTGHRPRERNRRRSPDHRHGRF</sequence>
<reference key="1">
    <citation type="submission" date="2003-06" db="EMBL/GenBank/DDBJ databases">
        <title>Liver regeneration after PH.</title>
        <authorList>
            <person name="Xu C.S."/>
            <person name="Li W.Q."/>
            <person name="Li Y.C."/>
            <person name="Ma H."/>
            <person name="Wang L."/>
            <person name="Wang S.F."/>
            <person name="Han H.P."/>
            <person name="Wang G.P."/>
            <person name="Chai L.Q."/>
            <person name="Yuan J.Y."/>
            <person name="Yang K.J."/>
            <person name="Yan H.M."/>
            <person name="Chang C.F."/>
            <person name="Zhao L.F."/>
            <person name="Shi J.B."/>
            <person name="Rahman S."/>
            <person name="Wang Q.N."/>
            <person name="Zhang J.B."/>
        </authorList>
    </citation>
    <scope>NUCLEOTIDE SEQUENCE [LARGE SCALE MRNA] (ISOFORMS 1 AND 2)</scope>
    <source>
        <tissue>Liver</tissue>
    </source>
</reference>
<accession>Q7TP17</accession>
<accession>Q7TP18</accession>
<proteinExistence type="evidence at transcript level"/>
<dbReference type="EMBL" id="AY325237">
    <property type="protein sequence ID" value="AAP92638.1"/>
    <property type="molecule type" value="mRNA"/>
</dbReference>
<dbReference type="EMBL" id="AY325238">
    <property type="protein sequence ID" value="AAP92639.1"/>
    <property type="molecule type" value="mRNA"/>
</dbReference>
<dbReference type="RefSeq" id="NP_001008775.1">
    <molecule id="Q7TP17-1"/>
    <property type="nucleotide sequence ID" value="NM_001008775.2"/>
</dbReference>
<dbReference type="RefSeq" id="XP_006228838.1">
    <property type="nucleotide sequence ID" value="XM_006228776.3"/>
</dbReference>
<dbReference type="SMR" id="Q7TP17"/>
<dbReference type="FunCoup" id="Q7TP17">
    <property type="interactions" value="2479"/>
</dbReference>
<dbReference type="STRING" id="10116.ENSRNOP00000030286"/>
<dbReference type="PhosphoSitePlus" id="Q7TP17"/>
<dbReference type="PaxDb" id="10116-ENSRNOP00000041377"/>
<dbReference type="Ensembl" id="ENSRNOT00000038154.5">
    <molecule id="Q7TP17-1"/>
    <property type="protein sequence ID" value="ENSRNOP00000030286.2"/>
    <property type="gene ID" value="ENSRNOG00000024497.7"/>
</dbReference>
<dbReference type="Ensembl" id="ENSRNOT00000116214.1">
    <molecule id="Q7TP17-2"/>
    <property type="protein sequence ID" value="ENSRNOP00000095413.1"/>
    <property type="gene ID" value="ENSRNOG00000024497.7"/>
</dbReference>
<dbReference type="GeneID" id="361542"/>
<dbReference type="KEGG" id="rno:361542"/>
<dbReference type="UCSC" id="RGD:1305600">
    <molecule id="Q7TP17-1"/>
    <property type="organism name" value="rat"/>
</dbReference>
<dbReference type="AGR" id="RGD:1305600"/>
<dbReference type="CTD" id="199746"/>
<dbReference type="RGD" id="1305600">
    <property type="gene designation" value="U2af1l4"/>
</dbReference>
<dbReference type="eggNOG" id="KOG2202">
    <property type="taxonomic scope" value="Eukaryota"/>
</dbReference>
<dbReference type="GeneTree" id="ENSGT00950000183152"/>
<dbReference type="HOGENOM" id="CLU_059852_1_0_1"/>
<dbReference type="InParanoid" id="Q7TP17"/>
<dbReference type="OMA" id="DRSHERH"/>
<dbReference type="OrthoDB" id="423462at2759"/>
<dbReference type="PhylomeDB" id="Q7TP17"/>
<dbReference type="TreeFam" id="TF300143"/>
<dbReference type="Reactome" id="R-RNO-159236">
    <property type="pathway name" value="Transport of Mature mRNA derived from an Intron-Containing Transcript"/>
</dbReference>
<dbReference type="Reactome" id="R-RNO-72163">
    <property type="pathway name" value="mRNA Splicing - Major Pathway"/>
</dbReference>
<dbReference type="Reactome" id="R-RNO-72187">
    <property type="pathway name" value="mRNA 3'-end processing"/>
</dbReference>
<dbReference type="Reactome" id="R-RNO-73856">
    <property type="pathway name" value="RNA Polymerase II Transcription Termination"/>
</dbReference>
<dbReference type="PRO" id="PR:Q7TP17"/>
<dbReference type="Proteomes" id="UP000002494">
    <property type="component" value="Chromosome 1"/>
</dbReference>
<dbReference type="Bgee" id="ENSRNOG00000024497">
    <property type="expression patterns" value="Expressed in testis and 20 other cell types or tissues"/>
</dbReference>
<dbReference type="GO" id="GO:0005737">
    <property type="term" value="C:cytoplasm"/>
    <property type="evidence" value="ECO:0007669"/>
    <property type="project" value="UniProtKB-SubCell"/>
</dbReference>
<dbReference type="GO" id="GO:0016607">
    <property type="term" value="C:nuclear speck"/>
    <property type="evidence" value="ECO:0007669"/>
    <property type="project" value="UniProtKB-SubCell"/>
</dbReference>
<dbReference type="GO" id="GO:0005681">
    <property type="term" value="C:spliceosomal complex"/>
    <property type="evidence" value="ECO:0000318"/>
    <property type="project" value="GO_Central"/>
</dbReference>
<dbReference type="GO" id="GO:0089701">
    <property type="term" value="C:U2AF complex"/>
    <property type="evidence" value="ECO:0000318"/>
    <property type="project" value="GO_Central"/>
</dbReference>
<dbReference type="GO" id="GO:0030628">
    <property type="term" value="F:pre-mRNA 3'-splice site binding"/>
    <property type="evidence" value="ECO:0000318"/>
    <property type="project" value="GO_Central"/>
</dbReference>
<dbReference type="GO" id="GO:0008270">
    <property type="term" value="F:zinc ion binding"/>
    <property type="evidence" value="ECO:0007669"/>
    <property type="project" value="UniProtKB-KW"/>
</dbReference>
<dbReference type="GO" id="GO:0000398">
    <property type="term" value="P:mRNA splicing, via spliceosome"/>
    <property type="evidence" value="ECO:0000318"/>
    <property type="project" value="GO_Central"/>
</dbReference>
<dbReference type="CDD" id="cd12538">
    <property type="entry name" value="RRM_U2AF35"/>
    <property type="match status" value="1"/>
</dbReference>
<dbReference type="FunFam" id="3.30.70.330:FF:000055">
    <property type="entry name" value="Splicing factor U2AF 35 kDa subunit"/>
    <property type="match status" value="1"/>
</dbReference>
<dbReference type="Gene3D" id="3.30.70.330">
    <property type="match status" value="1"/>
</dbReference>
<dbReference type="InterPro" id="IPR012677">
    <property type="entry name" value="Nucleotide-bd_a/b_plait_sf"/>
</dbReference>
<dbReference type="InterPro" id="IPR035979">
    <property type="entry name" value="RBD_domain_sf"/>
</dbReference>
<dbReference type="InterPro" id="IPR000504">
    <property type="entry name" value="RRM_dom"/>
</dbReference>
<dbReference type="InterPro" id="IPR003954">
    <property type="entry name" value="RRM_dom_euk"/>
</dbReference>
<dbReference type="InterPro" id="IPR009145">
    <property type="entry name" value="U2AF_small"/>
</dbReference>
<dbReference type="InterPro" id="IPR000571">
    <property type="entry name" value="Znf_CCCH"/>
</dbReference>
<dbReference type="PANTHER" id="PTHR12620">
    <property type="entry name" value="U2 SNRNP AUXILIARY FACTOR, SMALL SUBUNIT"/>
    <property type="match status" value="1"/>
</dbReference>
<dbReference type="Pfam" id="PF00076">
    <property type="entry name" value="RRM_1"/>
    <property type="match status" value="1"/>
</dbReference>
<dbReference type="Pfam" id="PF00642">
    <property type="entry name" value="zf-CCCH"/>
    <property type="match status" value="2"/>
</dbReference>
<dbReference type="PRINTS" id="PR01848">
    <property type="entry name" value="U2AUXFACTOR"/>
</dbReference>
<dbReference type="SMART" id="SM00360">
    <property type="entry name" value="RRM"/>
    <property type="match status" value="1"/>
</dbReference>
<dbReference type="SMART" id="SM00361">
    <property type="entry name" value="RRM_1"/>
    <property type="match status" value="1"/>
</dbReference>
<dbReference type="SMART" id="SM00356">
    <property type="entry name" value="ZnF_C3H1"/>
    <property type="match status" value="2"/>
</dbReference>
<dbReference type="SUPFAM" id="SSF54928">
    <property type="entry name" value="RNA-binding domain, RBD"/>
    <property type="match status" value="1"/>
</dbReference>
<dbReference type="PROSITE" id="PS50102">
    <property type="entry name" value="RRM"/>
    <property type="match status" value="1"/>
</dbReference>
<dbReference type="PROSITE" id="PS50103">
    <property type="entry name" value="ZF_C3H1"/>
    <property type="match status" value="2"/>
</dbReference>
<evidence type="ECO:0000250" key="1"/>
<evidence type="ECO:0000250" key="2">
    <source>
        <dbReference type="UniProtKB" id="Q8BGJ9"/>
    </source>
</evidence>
<evidence type="ECO:0000250" key="3">
    <source>
        <dbReference type="UniProtKB" id="Q8WU68"/>
    </source>
</evidence>
<evidence type="ECO:0000255" key="4">
    <source>
        <dbReference type="PROSITE-ProRule" id="PRU00176"/>
    </source>
</evidence>
<evidence type="ECO:0000255" key="5">
    <source>
        <dbReference type="PROSITE-ProRule" id="PRU00723"/>
    </source>
</evidence>
<evidence type="ECO:0000256" key="6">
    <source>
        <dbReference type="SAM" id="MobiDB-lite"/>
    </source>
</evidence>
<evidence type="ECO:0000303" key="7">
    <source ref="1"/>
</evidence>
<evidence type="ECO:0000305" key="8"/>
<feature type="initiator methionine" description="Removed" evidence="3">
    <location>
        <position position="1"/>
    </location>
</feature>
<feature type="chain" id="PRO_0000309742" description="Splicing factor U2AF 26 kDa subunit">
    <location>
        <begin position="2"/>
        <end position="220"/>
    </location>
</feature>
<feature type="domain" description="RRM" evidence="4">
    <location>
        <begin position="65"/>
        <end position="147"/>
    </location>
</feature>
<feature type="zinc finger region" description="C3H1-type 1" evidence="5">
    <location>
        <begin position="12"/>
        <end position="40"/>
    </location>
</feature>
<feature type="zinc finger region" description="C3H1-type 2" evidence="5">
    <location>
        <begin position="149"/>
        <end position="176"/>
    </location>
</feature>
<feature type="region of interest" description="Disordered" evidence="6">
    <location>
        <begin position="186"/>
        <end position="220"/>
    </location>
</feature>
<feature type="compositionally biased region" description="Basic residues" evidence="6">
    <location>
        <begin position="189"/>
        <end position="220"/>
    </location>
</feature>
<feature type="modified residue" description="N-acetylalanine" evidence="3">
    <location>
        <position position="2"/>
    </location>
</feature>
<feature type="splice variant" id="VSP_029266" description="In isoform 2." evidence="7">
    <original>MAEYLASIFGTEKDKVNCSFYFKIGACRHGDRCSRLHNKPTFS</original>
    <variation>MVIQVVRTITQKRKPTAERQTSRKKNQGLTALFTLRLGPAGTGTGAPDFTTNRLSARVGYTLHAVPLSELRSLLNFV</variation>
    <location>
        <begin position="1"/>
        <end position="43"/>
    </location>
</feature>